<name>HBAM_AQUCT</name>
<protein>
    <recommendedName>
        <fullName>Hemoglobin heart muscle subunit alpha-type</fullName>
    </recommendedName>
    <alternativeName>
        <fullName>Hemoglobin alpha-type chain, heart muscle</fullName>
    </alternativeName>
</protein>
<organism>
    <name type="scientific">Aquarana catesbeiana</name>
    <name type="common">American bullfrog</name>
    <name type="synonym">Rana catesbeiana</name>
    <dbReference type="NCBI Taxonomy" id="8400"/>
    <lineage>
        <taxon>Eukaryota</taxon>
        <taxon>Metazoa</taxon>
        <taxon>Chordata</taxon>
        <taxon>Craniata</taxon>
        <taxon>Vertebrata</taxon>
        <taxon>Euteleostomi</taxon>
        <taxon>Amphibia</taxon>
        <taxon>Batrachia</taxon>
        <taxon>Anura</taxon>
        <taxon>Neobatrachia</taxon>
        <taxon>Ranoidea</taxon>
        <taxon>Ranidae</taxon>
        <taxon>Aquarana</taxon>
    </lineage>
</organism>
<comment type="function">
    <text>This hemoglobin may replace myocardial myoglobin in this amphibian species.</text>
</comment>
<comment type="subunit">
    <text>Monomer.</text>
</comment>
<comment type="miscellaneous">
    <text>This chain appears to have diverged from the line leading to alpha-type hemoglobin chains close to the divergence of alpha and beta chains.</text>
</comment>
<comment type="similarity">
    <text evidence="1">Belongs to the globin family.</text>
</comment>
<sequence>GLSDSEKSAVASLWEKIAPQTNKLGAESMERLFKNHPETKSFFSRFDISPGSQDLLTHGGKIFGALGEAIKSLDNLQKYQDLHTNKLKLSSDHMKLLSAAIIEVFTAHFGGEVNQAAWNKFLGEVGAILTSS</sequence>
<feature type="chain" id="PRO_0000052844" description="Hemoglobin heart muscle subunit alpha-type">
    <location>
        <begin position="1"/>
        <end position="132"/>
    </location>
</feature>
<feature type="domain" description="Globin" evidence="1">
    <location>
        <begin position="1"/>
        <end position="132"/>
    </location>
</feature>
<feature type="binding site" description="distal binding residue" evidence="1">
    <location>
        <position position="58"/>
    </location>
    <ligand>
        <name>heme b</name>
        <dbReference type="ChEBI" id="CHEBI:60344"/>
    </ligand>
    <ligandPart>
        <name>Fe</name>
        <dbReference type="ChEBI" id="CHEBI:18248"/>
    </ligandPart>
</feature>
<feature type="binding site" description="proximal binding residue" evidence="1">
    <location>
        <position position="83"/>
    </location>
    <ligand>
        <name>heme b</name>
        <dbReference type="ChEBI" id="CHEBI:60344"/>
    </ligand>
    <ligandPart>
        <name>Fe</name>
        <dbReference type="ChEBI" id="CHEBI:18248"/>
    </ligandPart>
</feature>
<accession>P02022</accession>
<dbReference type="PIR" id="A02351">
    <property type="entry name" value="HAFGH"/>
</dbReference>
<dbReference type="SMR" id="P02022"/>
<dbReference type="GO" id="GO:0072562">
    <property type="term" value="C:blood microparticle"/>
    <property type="evidence" value="ECO:0007669"/>
    <property type="project" value="TreeGrafter"/>
</dbReference>
<dbReference type="GO" id="GO:0031838">
    <property type="term" value="C:haptoglobin-hemoglobin complex"/>
    <property type="evidence" value="ECO:0007669"/>
    <property type="project" value="TreeGrafter"/>
</dbReference>
<dbReference type="GO" id="GO:0005833">
    <property type="term" value="C:hemoglobin complex"/>
    <property type="evidence" value="ECO:0007669"/>
    <property type="project" value="InterPro"/>
</dbReference>
<dbReference type="GO" id="GO:0031720">
    <property type="term" value="F:haptoglobin binding"/>
    <property type="evidence" value="ECO:0007669"/>
    <property type="project" value="TreeGrafter"/>
</dbReference>
<dbReference type="GO" id="GO:0020037">
    <property type="term" value="F:heme binding"/>
    <property type="evidence" value="ECO:0007669"/>
    <property type="project" value="InterPro"/>
</dbReference>
<dbReference type="GO" id="GO:0046872">
    <property type="term" value="F:metal ion binding"/>
    <property type="evidence" value="ECO:0007669"/>
    <property type="project" value="UniProtKB-KW"/>
</dbReference>
<dbReference type="GO" id="GO:0043177">
    <property type="term" value="F:organic acid binding"/>
    <property type="evidence" value="ECO:0007669"/>
    <property type="project" value="TreeGrafter"/>
</dbReference>
<dbReference type="GO" id="GO:0019825">
    <property type="term" value="F:oxygen binding"/>
    <property type="evidence" value="ECO:0007669"/>
    <property type="project" value="InterPro"/>
</dbReference>
<dbReference type="GO" id="GO:0005344">
    <property type="term" value="F:oxygen carrier activity"/>
    <property type="evidence" value="ECO:0007669"/>
    <property type="project" value="UniProtKB-KW"/>
</dbReference>
<dbReference type="GO" id="GO:0004601">
    <property type="term" value="F:peroxidase activity"/>
    <property type="evidence" value="ECO:0007669"/>
    <property type="project" value="TreeGrafter"/>
</dbReference>
<dbReference type="GO" id="GO:0042744">
    <property type="term" value="P:hydrogen peroxide catabolic process"/>
    <property type="evidence" value="ECO:0007669"/>
    <property type="project" value="TreeGrafter"/>
</dbReference>
<dbReference type="Gene3D" id="1.10.490.10">
    <property type="entry name" value="Globins"/>
    <property type="match status" value="1"/>
</dbReference>
<dbReference type="InterPro" id="IPR000971">
    <property type="entry name" value="Globin"/>
</dbReference>
<dbReference type="InterPro" id="IPR009050">
    <property type="entry name" value="Globin-like_sf"/>
</dbReference>
<dbReference type="InterPro" id="IPR012292">
    <property type="entry name" value="Globin/Proto"/>
</dbReference>
<dbReference type="InterPro" id="IPR002338">
    <property type="entry name" value="Hemoglobin_a-typ"/>
</dbReference>
<dbReference type="InterPro" id="IPR050056">
    <property type="entry name" value="Hemoglobin_oxygen_transport"/>
</dbReference>
<dbReference type="PANTHER" id="PTHR11442">
    <property type="entry name" value="HEMOGLOBIN FAMILY MEMBER"/>
    <property type="match status" value="1"/>
</dbReference>
<dbReference type="PANTHER" id="PTHR11442:SF8">
    <property type="entry name" value="HEMOGLOBIN SUBUNIT MU"/>
    <property type="match status" value="1"/>
</dbReference>
<dbReference type="Pfam" id="PF00042">
    <property type="entry name" value="Globin"/>
    <property type="match status" value="1"/>
</dbReference>
<dbReference type="PRINTS" id="PR00612">
    <property type="entry name" value="ALPHAHAEM"/>
</dbReference>
<dbReference type="SUPFAM" id="SSF46458">
    <property type="entry name" value="Globin-like"/>
    <property type="match status" value="1"/>
</dbReference>
<dbReference type="PROSITE" id="PS01033">
    <property type="entry name" value="GLOBIN"/>
    <property type="match status" value="1"/>
</dbReference>
<keyword id="KW-0903">Direct protein sequencing</keyword>
<keyword id="KW-0349">Heme</keyword>
<keyword id="KW-0408">Iron</keyword>
<keyword id="KW-0479">Metal-binding</keyword>
<keyword id="KW-0561">Oxygen transport</keyword>
<keyword id="KW-0813">Transport</keyword>
<reference key="1">
    <citation type="journal article" date="1982" name="J. Biol. Chem.">
        <title>Isolation and amino acid sequence of a monomeric hemoglobin in heart muscle of the bullfrog, Rana catesbeiana.</title>
        <authorList>
            <person name="Maeda N."/>
            <person name="Fitch W.M."/>
        </authorList>
    </citation>
    <scope>PROTEIN SEQUENCE</scope>
</reference>
<proteinExistence type="evidence at protein level"/>
<evidence type="ECO:0000255" key="1">
    <source>
        <dbReference type="PROSITE-ProRule" id="PRU00238"/>
    </source>
</evidence>